<organism>
    <name type="scientific">Pisum sativum</name>
    <name type="common">Garden pea</name>
    <name type="synonym">Lathyrus oleraceus</name>
    <dbReference type="NCBI Taxonomy" id="3888"/>
    <lineage>
        <taxon>Eukaryota</taxon>
        <taxon>Viridiplantae</taxon>
        <taxon>Streptophyta</taxon>
        <taxon>Embryophyta</taxon>
        <taxon>Tracheophyta</taxon>
        <taxon>Spermatophyta</taxon>
        <taxon>Magnoliopsida</taxon>
        <taxon>eudicotyledons</taxon>
        <taxon>Gunneridae</taxon>
        <taxon>Pentapetalae</taxon>
        <taxon>rosids</taxon>
        <taxon>fabids</taxon>
        <taxon>Fabales</taxon>
        <taxon>Fabaceae</taxon>
        <taxon>Papilionoideae</taxon>
        <taxon>50 kb inversion clade</taxon>
        <taxon>NPAAA clade</taxon>
        <taxon>Hologalegina</taxon>
        <taxon>IRL clade</taxon>
        <taxon>Fabeae</taxon>
        <taxon>Pisum</taxon>
    </lineage>
</organism>
<geneLocation type="chloroplast"/>
<protein>
    <recommendedName>
        <fullName evidence="1">Photosystem II protein D1</fullName>
        <shortName evidence="1">PSII D1 protein</shortName>
        <ecNumber evidence="1">1.10.3.9</ecNumber>
    </recommendedName>
    <alternativeName>
        <fullName evidence="4">32 kDa thylakoid membrane protein</fullName>
    </alternativeName>
    <alternativeName>
        <fullName evidence="1">Photosystem II Q(B) protein</fullName>
    </alternativeName>
</protein>
<proteinExistence type="evidence at protein level"/>
<dbReference type="EC" id="1.10.3.9" evidence="1"/>
<dbReference type="EMBL" id="M11005">
    <property type="protein sequence ID" value="AAA84547.1"/>
    <property type="molecule type" value="Genomic_DNA"/>
</dbReference>
<dbReference type="EMBL" id="M16899">
    <property type="protein sequence ID" value="AAA84549.1"/>
    <property type="molecule type" value="Genomic_DNA"/>
</dbReference>
<dbReference type="EMBL" id="M16865">
    <property type="protein sequence ID" value="AAA84544.1"/>
    <property type="molecule type" value="Genomic_DNA"/>
</dbReference>
<dbReference type="PIR" id="S11299">
    <property type="entry name" value="F2PMD1"/>
</dbReference>
<dbReference type="RefSeq" id="YP_003587522.1">
    <property type="nucleotide sequence ID" value="NC_014057.1"/>
</dbReference>
<dbReference type="PDB" id="5XNL">
    <property type="method" value="EM"/>
    <property type="resolution" value="2.70 A"/>
    <property type="chains" value="A/a=1-344"/>
</dbReference>
<dbReference type="PDB" id="5XNM">
    <property type="method" value="EM"/>
    <property type="resolution" value="3.20 A"/>
    <property type="chains" value="A/a=1-344"/>
</dbReference>
<dbReference type="PDB" id="6YP7">
    <property type="method" value="EM"/>
    <property type="resolution" value="3.80 A"/>
    <property type="chains" value="A/a=11-344"/>
</dbReference>
<dbReference type="PDBsum" id="5XNL"/>
<dbReference type="PDBsum" id="5XNM"/>
<dbReference type="PDBsum" id="6YP7"/>
<dbReference type="EMDB" id="EMD-10865"/>
<dbReference type="EMDB" id="EMD-6741"/>
<dbReference type="EMDB" id="EMD-6742"/>
<dbReference type="SMR" id="P06585"/>
<dbReference type="iPTMnet" id="P06585"/>
<dbReference type="GeneID" id="9073046"/>
<dbReference type="OrthoDB" id="1391628at2759"/>
<dbReference type="GO" id="GO:0009535">
    <property type="term" value="C:chloroplast thylakoid membrane"/>
    <property type="evidence" value="ECO:0007669"/>
    <property type="project" value="UniProtKB-SubCell"/>
</dbReference>
<dbReference type="GO" id="GO:0009523">
    <property type="term" value="C:photosystem II"/>
    <property type="evidence" value="ECO:0007669"/>
    <property type="project" value="UniProtKB-KW"/>
</dbReference>
<dbReference type="GO" id="GO:0016168">
    <property type="term" value="F:chlorophyll binding"/>
    <property type="evidence" value="ECO:0007669"/>
    <property type="project" value="UniProtKB-UniRule"/>
</dbReference>
<dbReference type="GO" id="GO:0045156">
    <property type="term" value="F:electron transporter, transferring electrons within the cyclic electron transport pathway of photosynthesis activity"/>
    <property type="evidence" value="ECO:0007669"/>
    <property type="project" value="InterPro"/>
</dbReference>
<dbReference type="GO" id="GO:0005506">
    <property type="term" value="F:iron ion binding"/>
    <property type="evidence" value="ECO:0007669"/>
    <property type="project" value="UniProtKB-UniRule"/>
</dbReference>
<dbReference type="GO" id="GO:0016682">
    <property type="term" value="F:oxidoreductase activity, acting on diphenols and related substances as donors, oxygen as acceptor"/>
    <property type="evidence" value="ECO:0007669"/>
    <property type="project" value="UniProtKB-UniRule"/>
</dbReference>
<dbReference type="GO" id="GO:0010242">
    <property type="term" value="F:oxygen evolving activity"/>
    <property type="evidence" value="ECO:0007669"/>
    <property type="project" value="UniProtKB-EC"/>
</dbReference>
<dbReference type="GO" id="GO:0009772">
    <property type="term" value="P:photosynthetic electron transport in photosystem II"/>
    <property type="evidence" value="ECO:0007669"/>
    <property type="project" value="InterPro"/>
</dbReference>
<dbReference type="GO" id="GO:0009635">
    <property type="term" value="P:response to herbicide"/>
    <property type="evidence" value="ECO:0007669"/>
    <property type="project" value="UniProtKB-KW"/>
</dbReference>
<dbReference type="CDD" id="cd09289">
    <property type="entry name" value="Photosystem-II_D1"/>
    <property type="match status" value="1"/>
</dbReference>
<dbReference type="FunFam" id="1.20.85.10:FF:000002">
    <property type="entry name" value="Photosystem II protein D1"/>
    <property type="match status" value="1"/>
</dbReference>
<dbReference type="Gene3D" id="1.20.85.10">
    <property type="entry name" value="Photosystem II protein D1-like"/>
    <property type="match status" value="1"/>
</dbReference>
<dbReference type="HAMAP" id="MF_01379">
    <property type="entry name" value="PSII_PsbA_D1"/>
    <property type="match status" value="1"/>
</dbReference>
<dbReference type="InterPro" id="IPR055266">
    <property type="entry name" value="D1/D2"/>
</dbReference>
<dbReference type="InterPro" id="IPR036854">
    <property type="entry name" value="Photo_II_D1/D2_sf"/>
</dbReference>
<dbReference type="InterPro" id="IPR000484">
    <property type="entry name" value="Photo_RC_L/M"/>
</dbReference>
<dbReference type="InterPro" id="IPR055265">
    <property type="entry name" value="Photo_RC_L/M_CS"/>
</dbReference>
<dbReference type="InterPro" id="IPR005867">
    <property type="entry name" value="PSII_D1"/>
</dbReference>
<dbReference type="NCBIfam" id="TIGR01151">
    <property type="entry name" value="psbA"/>
    <property type="match status" value="1"/>
</dbReference>
<dbReference type="PANTHER" id="PTHR33149:SF12">
    <property type="entry name" value="PHOTOSYSTEM II D2 PROTEIN"/>
    <property type="match status" value="1"/>
</dbReference>
<dbReference type="PANTHER" id="PTHR33149">
    <property type="entry name" value="PHOTOSYSTEM II PROTEIN D1"/>
    <property type="match status" value="1"/>
</dbReference>
<dbReference type="Pfam" id="PF00124">
    <property type="entry name" value="Photo_RC"/>
    <property type="match status" value="1"/>
</dbReference>
<dbReference type="PRINTS" id="PR00256">
    <property type="entry name" value="REACTNCENTRE"/>
</dbReference>
<dbReference type="SUPFAM" id="SSF81483">
    <property type="entry name" value="Bacterial photosystem II reaction centre, L and M subunits"/>
    <property type="match status" value="1"/>
</dbReference>
<dbReference type="PROSITE" id="PS00244">
    <property type="entry name" value="REACTION_CENTER"/>
    <property type="match status" value="1"/>
</dbReference>
<name>PSBA_PEA</name>
<evidence type="ECO:0000255" key="1">
    <source>
        <dbReference type="HAMAP-Rule" id="MF_01379"/>
    </source>
</evidence>
<evidence type="ECO:0000269" key="2">
    <source>
    </source>
</evidence>
<evidence type="ECO:0000269" key="3">
    <source>
    </source>
</evidence>
<evidence type="ECO:0000303" key="4">
    <source>
    </source>
</evidence>
<evidence type="ECO:0000305" key="5">
    <source>
    </source>
</evidence>
<evidence type="ECO:0007829" key="6">
    <source>
        <dbReference type="PDB" id="5XNL"/>
    </source>
</evidence>
<evidence type="ECO:0007829" key="7">
    <source>
        <dbReference type="PDB" id="5XNM"/>
    </source>
</evidence>
<comment type="function">
    <text>This is one of the two reaction center proteins of photosystem II.</text>
</comment>
<comment type="function">
    <text evidence="1">Photosystem II (PSII) is a light-driven water:plastoquinone oxidoreductase that uses light energy to abstract electrons from H(2)O, generating O(2) and a proton gradient subsequently used for ATP formation. It consists of a core antenna complex that captures photons, and an electron transfer chain that converts photonic excitation into a charge separation. The D1/D2 (PsbA/PsbD) reaction center heterodimer binds P680, the primary electron donor of PSII as well as several subsequent electron acceptors.</text>
</comment>
<comment type="catalytic activity">
    <reaction evidence="1">
        <text>2 a plastoquinone + 4 hnu + 2 H2O = 2 a plastoquinol + O2</text>
        <dbReference type="Rhea" id="RHEA:36359"/>
        <dbReference type="Rhea" id="RHEA-COMP:9561"/>
        <dbReference type="Rhea" id="RHEA-COMP:9562"/>
        <dbReference type="ChEBI" id="CHEBI:15377"/>
        <dbReference type="ChEBI" id="CHEBI:15379"/>
        <dbReference type="ChEBI" id="CHEBI:17757"/>
        <dbReference type="ChEBI" id="CHEBI:30212"/>
        <dbReference type="ChEBI" id="CHEBI:62192"/>
        <dbReference type="EC" id="1.10.3.9"/>
    </reaction>
</comment>
<comment type="cofactor">
    <text evidence="1">The D1/D2 heterodimer binds P680, chlorophylls that are the primary electron donor of PSII, and subsequent electron acceptors. It shares a non-heme iron and each subunit binds pheophytin, quinone, additional chlorophylls, carotenoids and lipids. D1 provides most of the ligands for the Mn4-Ca-O5 cluster of the oxygen-evolving complex (OEC). There is also a Cl(-1) ion associated with D1 and D2, which is required for oxygen evolution. The PSII complex binds additional chlorophylls, carotenoids and specific lipids.</text>
</comment>
<comment type="subunit">
    <text evidence="1">PSII is composed of 1 copy each of membrane proteins PsbA, PsbB, PsbC, PsbD, PsbE, PsbF, PsbH, PsbI, PsbJ, PsbK, PsbL, PsbM, PsbT, PsbX, PsbY, PsbZ, Psb30/Ycf12, at least 3 peripheral proteins of the oxygen-evolving complex and a large number of cofactors. It forms dimeric complexes.</text>
</comment>
<comment type="subcellular location">
    <subcellularLocation>
        <location evidence="1 2 3">Plastid</location>
        <location evidence="1 2 3">Chloroplast thylakoid membrane</location>
        <topology evidence="1">Multi-pass membrane protein</topology>
    </subcellularLocation>
</comment>
<comment type="PTM">
    <text evidence="1">Tyr-161 forms a radical intermediate that is referred to as redox-active TyrZ, YZ or Y-Z.</text>
</comment>
<comment type="PTM">
    <text evidence="1">C-terminally processed by CTPA; processing is essential to allow assembly of the oxygen-evolving complex and thus photosynthetic growth.</text>
</comment>
<comment type="mass spectrometry"/>
<comment type="miscellaneous">
    <text evidence="1">2 of the reaction center chlorophylls (ChlD1 and ChlD2) are entirely coordinated by water.</text>
</comment>
<comment type="miscellaneous">
    <text evidence="1 5">Herbicides such as atrazine, BNT, diuron or ioxynil bind in the Q(B) binding site and block subsequent electron transfer.</text>
</comment>
<comment type="similarity">
    <text evidence="1">Belongs to the reaction center PufL/M/PsbA/D family.</text>
</comment>
<gene>
    <name evidence="1" type="primary">psbA</name>
    <name type="synonym">pgiI</name>
</gene>
<sequence>MTAILERRDSENLWGRFCNWITSTENRLYIGWFGVLMIPTLLTATSVFIIAFIAAPPVDIDGIREPVSGSLLYGNNIISGAIIPTSAAIGLHFYPIWEAASVDEWLYNGGPYELIVLHFLLGVACYMGREWELSFRLGMRPWIAVAYSAPVAAATAVFLIYPIGQGSFSDGMPLGISGTFNFMIVFQAEHNILMHPFHMLGVAGVFGGSLFSAMHGSLVTSSLIRETTENESANEGYRFGQEEETYNIVAAHGYFGRLIFQYASFNNSRSLHFFLAAWPVVGIWFTALGISTMAFNLNGFNFNQSVVDSQGRVINTWADIINRANLGMEVMHERNAHNFPLDLAAVEAPSING</sequence>
<feature type="initiator methionine" description="Removed" evidence="1 3">
    <location>
        <position position="1"/>
    </location>
</feature>
<feature type="chain" id="PRO_0000030244" description="Photosystem II protein D1" evidence="1">
    <location>
        <begin position="2"/>
        <end position="344"/>
    </location>
</feature>
<feature type="propeptide" id="PRO_0000030245" evidence="1">
    <location>
        <begin position="345"/>
        <end position="353"/>
    </location>
</feature>
<feature type="transmembrane region" description="Helical" evidence="1">
    <location>
        <begin position="29"/>
        <end position="46"/>
    </location>
</feature>
<feature type="transmembrane region" description="Helical" evidence="1">
    <location>
        <begin position="118"/>
        <end position="133"/>
    </location>
</feature>
<feature type="transmembrane region" description="Helical" evidence="1">
    <location>
        <begin position="142"/>
        <end position="156"/>
    </location>
</feature>
<feature type="transmembrane region" description="Helical" evidence="1">
    <location>
        <begin position="197"/>
        <end position="218"/>
    </location>
</feature>
<feature type="transmembrane region" description="Helical" evidence="1">
    <location>
        <begin position="274"/>
        <end position="288"/>
    </location>
</feature>
<feature type="binding site" description="axial binding residue" evidence="1">
    <location>
        <position position="118"/>
    </location>
    <ligand>
        <name>chlorophyll a</name>
        <dbReference type="ChEBI" id="CHEBI:58416"/>
        <label>ChlzD1</label>
    </ligand>
    <ligandPart>
        <name>Mg</name>
        <dbReference type="ChEBI" id="CHEBI:25107"/>
    </ligandPart>
</feature>
<feature type="binding site" evidence="1">
    <location>
        <position position="126"/>
    </location>
    <ligand>
        <name>pheophytin a</name>
        <dbReference type="ChEBI" id="CHEBI:136840"/>
        <label>D1</label>
    </ligand>
</feature>
<feature type="binding site" evidence="1">
    <location>
        <position position="170"/>
    </location>
    <ligand>
        <name>[CaMn4O5] cluster</name>
        <dbReference type="ChEBI" id="CHEBI:189552"/>
    </ligand>
</feature>
<feature type="binding site" evidence="1">
    <location>
        <position position="189"/>
    </location>
    <ligand>
        <name>[CaMn4O5] cluster</name>
        <dbReference type="ChEBI" id="CHEBI:189552"/>
    </ligand>
</feature>
<feature type="binding site" description="axial binding residue" evidence="1">
    <location>
        <position position="198"/>
    </location>
    <ligand>
        <name>chlorophyll a</name>
        <dbReference type="ChEBI" id="CHEBI:58416"/>
        <label>PD1</label>
    </ligand>
    <ligandPart>
        <name>Mg</name>
        <dbReference type="ChEBI" id="CHEBI:25107"/>
    </ligandPart>
</feature>
<feature type="binding site" evidence="1">
    <location>
        <position position="215"/>
    </location>
    <ligand>
        <name>a quinone</name>
        <dbReference type="ChEBI" id="CHEBI:132124"/>
        <label>B</label>
    </ligand>
</feature>
<feature type="binding site" evidence="1">
    <location>
        <position position="215"/>
    </location>
    <ligand>
        <name>Fe cation</name>
        <dbReference type="ChEBI" id="CHEBI:24875"/>
        <note>ligand shared with heterodimeric partner</note>
    </ligand>
</feature>
<feature type="binding site" evidence="1">
    <location>
        <begin position="264"/>
        <end position="265"/>
    </location>
    <ligand>
        <name>a quinone</name>
        <dbReference type="ChEBI" id="CHEBI:132124"/>
        <label>B</label>
    </ligand>
</feature>
<feature type="binding site" evidence="1">
    <location>
        <position position="272"/>
    </location>
    <ligand>
        <name>Fe cation</name>
        <dbReference type="ChEBI" id="CHEBI:24875"/>
        <note>ligand shared with heterodimeric partner</note>
    </ligand>
</feature>
<feature type="binding site" evidence="1">
    <location>
        <position position="332"/>
    </location>
    <ligand>
        <name>[CaMn4O5] cluster</name>
        <dbReference type="ChEBI" id="CHEBI:189552"/>
    </ligand>
</feature>
<feature type="binding site" evidence="1">
    <location>
        <position position="333"/>
    </location>
    <ligand>
        <name>[CaMn4O5] cluster</name>
        <dbReference type="ChEBI" id="CHEBI:189552"/>
    </ligand>
</feature>
<feature type="binding site" evidence="1">
    <location>
        <position position="342"/>
    </location>
    <ligand>
        <name>[CaMn4O5] cluster</name>
        <dbReference type="ChEBI" id="CHEBI:189552"/>
    </ligand>
</feature>
<feature type="binding site" evidence="1">
    <location>
        <position position="344"/>
    </location>
    <ligand>
        <name>[CaMn4O5] cluster</name>
        <dbReference type="ChEBI" id="CHEBI:189552"/>
    </ligand>
</feature>
<feature type="site" description="Tyrosine radical intermediate" evidence="1">
    <location>
        <position position="161"/>
    </location>
</feature>
<feature type="site" description="Stabilizes free radical intermediate" evidence="1">
    <location>
        <position position="190"/>
    </location>
</feature>
<feature type="site" description="Cleavage; by CTPA" evidence="1">
    <location>
        <begin position="344"/>
        <end position="345"/>
    </location>
</feature>
<feature type="modified residue" description="N-acetylthreonine" evidence="1 3">
    <location>
        <position position="2"/>
    </location>
</feature>
<feature type="modified residue" description="Phosphothreonine" evidence="1 3">
    <location>
        <position position="2"/>
    </location>
</feature>
<feature type="mutagenesis site" description="Herbicide resistance.">
    <original>S</original>
    <variation>G</variation>
    <location>
        <position position="264"/>
    </location>
</feature>
<feature type="helix" evidence="6">
    <location>
        <begin position="13"/>
        <end position="21"/>
    </location>
</feature>
<feature type="strand" evidence="6">
    <location>
        <begin position="26"/>
        <end position="28"/>
    </location>
</feature>
<feature type="helix" evidence="6">
    <location>
        <begin position="31"/>
        <end position="54"/>
    </location>
</feature>
<feature type="strand" evidence="6">
    <location>
        <begin position="58"/>
        <end position="64"/>
    </location>
</feature>
<feature type="helix" evidence="6">
    <location>
        <begin position="71"/>
        <end position="73"/>
    </location>
</feature>
<feature type="turn" evidence="6">
    <location>
        <begin position="77"/>
        <end position="79"/>
    </location>
</feature>
<feature type="turn" evidence="6">
    <location>
        <begin position="87"/>
        <end position="91"/>
    </location>
</feature>
<feature type="strand" evidence="7">
    <location>
        <begin position="99"/>
        <end position="101"/>
    </location>
</feature>
<feature type="helix" evidence="6">
    <location>
        <begin position="102"/>
        <end position="107"/>
    </location>
</feature>
<feature type="helix" evidence="6">
    <location>
        <begin position="110"/>
        <end position="136"/>
    </location>
</feature>
<feature type="helix" evidence="6">
    <location>
        <begin position="143"/>
        <end position="158"/>
    </location>
</feature>
<feature type="helix" evidence="6">
    <location>
        <begin position="160"/>
        <end position="165"/>
    </location>
</feature>
<feature type="helix" evidence="6">
    <location>
        <begin position="168"/>
        <end position="170"/>
    </location>
</feature>
<feature type="helix" evidence="6">
    <location>
        <begin position="176"/>
        <end position="190"/>
    </location>
</feature>
<feature type="helix" evidence="6">
    <location>
        <begin position="196"/>
        <end position="220"/>
    </location>
</feature>
<feature type="strand" evidence="7">
    <location>
        <begin position="229"/>
        <end position="231"/>
    </location>
</feature>
<feature type="helix" evidence="6">
    <location>
        <begin position="233"/>
        <end position="236"/>
    </location>
</feature>
<feature type="helix" evidence="6">
    <location>
        <begin position="248"/>
        <end position="258"/>
    </location>
</feature>
<feature type="strand" evidence="6">
    <location>
        <begin position="261"/>
        <end position="263"/>
    </location>
</feature>
<feature type="helix" evidence="6">
    <location>
        <begin position="268"/>
        <end position="292"/>
    </location>
</feature>
<feature type="turn" evidence="6">
    <location>
        <begin position="293"/>
        <end position="296"/>
    </location>
</feature>
<feature type="strand" evidence="6">
    <location>
        <begin position="297"/>
        <end position="299"/>
    </location>
</feature>
<feature type="helix" evidence="6">
    <location>
        <begin position="317"/>
        <end position="331"/>
    </location>
</feature>
<feature type="turn" evidence="6">
    <location>
        <begin position="332"/>
        <end position="336"/>
    </location>
</feature>
<feature type="strand" evidence="6">
    <location>
        <begin position="338"/>
        <end position="341"/>
    </location>
</feature>
<accession>P06585</accession>
<reference key="1">
    <citation type="journal article" date="1984" name="Mol. Cell. Biol.">
        <title>Sequence organization of a pea chloroplast DNA gene coding for a 34,500-dalton protein.</title>
        <authorList>
            <person name="Oishi K.K."/>
            <person name="Shapiro D.R."/>
            <person name="Tewari K.K."/>
        </authorList>
    </citation>
    <scope>NUCLEOTIDE SEQUENCE [GENOMIC DNA]</scope>
    <source>
        <strain>cv. Rosakrone</strain>
    </source>
</reference>
<reference key="2">
    <citation type="journal article" date="1986" name="Plant Mol. Biol.">
        <title>Characterization of P. sativum chloroplast psbA transcripts produced in vivo, in vitro and in E. coli.</title>
        <authorList>
            <person name="Boyer S.K."/>
            <person name="Mullet J.E."/>
        </authorList>
        <dbReference type="AGRICOLA" id="IND86033493"/>
    </citation>
    <scope>NUCLEOTIDE SEQUENCE [GENOMIC DNA] OF 1-156</scope>
</reference>
<reference key="3">
    <citation type="journal article" date="1992" name="Eur. J. Biochem.">
        <title>Sequence analysis of photoaffinity-labelled peptides derived by proteolysis of photosystem-2 reaction centres from thylakoid membranes treated with [14C]azidoatrazine.</title>
        <authorList>
            <person name="Whitelegge J.P."/>
            <person name="Jewess P."/>
            <person name="Pickering M.G."/>
            <person name="Gerrish C."/>
            <person name="Camilleri P."/>
            <person name="Bowyer J.R."/>
        </authorList>
    </citation>
    <scope>PROTEIN SEQUENCE OF 137-147</scope>
    <scope>SUBCELLULAR LOCATION</scope>
    <scope>HERBICIDE-BINDING</scope>
    <source>
        <strain>cv. Feltham First</strain>
    </source>
</reference>
<reference key="4">
    <citation type="journal article" date="1986" name="Plant Mol. Biol.">
        <title>Nucleotide sequences of transfer RNA genes in the Pisum sativum chloroplast DNA.</title>
        <authorList>
            <person name="Shapiro D.R."/>
            <person name="Tewari K.K."/>
        </authorList>
        <dbReference type="AGRICOLA" id="IND86020298"/>
    </citation>
    <scope>NUCLEOTIDE SEQUENCE [GENOMIC DNA] OF 327-353</scope>
    <source>
        <strain>cv. Rosakrone</strain>
    </source>
</reference>
<reference key="5">
    <citation type="journal article" date="1997" name="J. Biol. Chem.">
        <title>Primary structure characterization of the photosystem II D1 and D2 subunits.</title>
        <authorList>
            <person name="Sharma J."/>
            <person name="Panico M."/>
            <person name="Shipton C.A."/>
            <person name="Nilsson F."/>
            <person name="Morris H.R."/>
            <person name="Barber J."/>
        </authorList>
    </citation>
    <scope>IDENTIFICATION BY MASS SPECTROMETRY</scope>
    <scope>SUBCELLULAR LOCATION</scope>
    <scope>ACETYLATION AT THR-2</scope>
    <scope>PHOSPHORYLATION AT THR-2</scope>
</reference>
<keyword id="KW-0002">3D-structure</keyword>
<keyword id="KW-0007">Acetylation</keyword>
<keyword id="KW-0106">Calcium</keyword>
<keyword id="KW-0148">Chlorophyll</keyword>
<keyword id="KW-0150">Chloroplast</keyword>
<keyword id="KW-0157">Chromophore</keyword>
<keyword id="KW-0903">Direct protein sequencing</keyword>
<keyword id="KW-0249">Electron transport</keyword>
<keyword id="KW-0359">Herbicide resistance</keyword>
<keyword id="KW-0408">Iron</keyword>
<keyword id="KW-0460">Magnesium</keyword>
<keyword id="KW-0464">Manganese</keyword>
<keyword id="KW-0472">Membrane</keyword>
<keyword id="KW-0479">Metal-binding</keyword>
<keyword id="KW-0560">Oxidoreductase</keyword>
<keyword id="KW-0597">Phosphoprotein</keyword>
<keyword id="KW-0602">Photosynthesis</keyword>
<keyword id="KW-0604">Photosystem II</keyword>
<keyword id="KW-0934">Plastid</keyword>
<keyword id="KW-0793">Thylakoid</keyword>
<keyword id="KW-0812">Transmembrane</keyword>
<keyword id="KW-1133">Transmembrane helix</keyword>
<keyword id="KW-0813">Transport</keyword>